<organism>
    <name type="scientific">Salmonella typhimurium (strain LT2 / SGSC1412 / ATCC 700720)</name>
    <dbReference type="NCBI Taxonomy" id="99287"/>
    <lineage>
        <taxon>Bacteria</taxon>
        <taxon>Pseudomonadati</taxon>
        <taxon>Pseudomonadota</taxon>
        <taxon>Gammaproteobacteria</taxon>
        <taxon>Enterobacterales</taxon>
        <taxon>Enterobacteriaceae</taxon>
        <taxon>Salmonella</taxon>
    </lineage>
</organism>
<dbReference type="EMBL" id="X56793">
    <property type="protein sequence ID" value="CAA40124.1"/>
    <property type="molecule type" value="Genomic_DNA"/>
</dbReference>
<dbReference type="EMBL" id="AE006468">
    <property type="protein sequence ID" value="AAL20992.1"/>
    <property type="molecule type" value="Genomic_DNA"/>
</dbReference>
<dbReference type="PIR" id="S15308">
    <property type="entry name" value="S15308"/>
</dbReference>
<dbReference type="RefSeq" id="NP_461033.1">
    <property type="nucleotide sequence ID" value="NC_003197.2"/>
</dbReference>
<dbReference type="RefSeq" id="WP_010989038.1">
    <property type="nucleotide sequence ID" value="NC_003197.2"/>
</dbReference>
<dbReference type="SMR" id="P26400"/>
<dbReference type="STRING" id="99287.STM2088"/>
<dbReference type="PaxDb" id="99287-STM2088"/>
<dbReference type="GeneID" id="1253609"/>
<dbReference type="KEGG" id="stm:STM2088"/>
<dbReference type="PATRIC" id="fig|99287.12.peg.2210"/>
<dbReference type="HOGENOM" id="CLU_052342_0_0_6"/>
<dbReference type="BioCyc" id="MetaCyc:STM2088-MONOMER"/>
<dbReference type="BioCyc" id="SENT99287:STM2088-MONOMER"/>
<dbReference type="UniPathway" id="UPA00281"/>
<dbReference type="Proteomes" id="UP000001014">
    <property type="component" value="Chromosome"/>
</dbReference>
<dbReference type="GO" id="GO:0005886">
    <property type="term" value="C:plasma membrane"/>
    <property type="evidence" value="ECO:0000318"/>
    <property type="project" value="GO_Central"/>
</dbReference>
<dbReference type="GO" id="GO:0009243">
    <property type="term" value="P:O antigen biosynthetic process"/>
    <property type="evidence" value="ECO:0007669"/>
    <property type="project" value="UniProtKB-UniPathway"/>
</dbReference>
<dbReference type="CDD" id="cd12082">
    <property type="entry name" value="MATE_like"/>
    <property type="match status" value="1"/>
</dbReference>
<dbReference type="InterPro" id="IPR050833">
    <property type="entry name" value="Poly_Biosynth_Transport"/>
</dbReference>
<dbReference type="PANTHER" id="PTHR30250:SF11">
    <property type="entry name" value="O-ANTIGEN TRANSPORTER-RELATED"/>
    <property type="match status" value="1"/>
</dbReference>
<dbReference type="PANTHER" id="PTHR30250">
    <property type="entry name" value="PST FAMILY PREDICTED COLANIC ACID TRANSPORTER"/>
    <property type="match status" value="1"/>
</dbReference>
<feature type="chain" id="PRO_0000097296" description="Putative O-antigen transporter">
    <location>
        <begin position="1"/>
        <end position="430"/>
    </location>
</feature>
<feature type="transmembrane region" description="Helical" evidence="1">
    <location>
        <begin position="23"/>
        <end position="39"/>
    </location>
</feature>
<feature type="transmembrane region" description="Helical" evidence="1">
    <location>
        <begin position="45"/>
        <end position="61"/>
    </location>
</feature>
<feature type="transmembrane region" description="Helical" evidence="1">
    <location>
        <begin position="96"/>
        <end position="112"/>
    </location>
</feature>
<feature type="transmembrane region" description="Helical" evidence="1">
    <location>
        <begin position="131"/>
        <end position="147"/>
    </location>
</feature>
<feature type="transmembrane region" description="Helical" evidence="1">
    <location>
        <begin position="163"/>
        <end position="179"/>
    </location>
</feature>
<feature type="transmembrane region" description="Helical" evidence="1">
    <location>
        <begin position="192"/>
        <end position="208"/>
    </location>
</feature>
<feature type="transmembrane region" description="Helical" evidence="1">
    <location>
        <begin position="236"/>
        <end position="252"/>
    </location>
</feature>
<feature type="transmembrane region" description="Helical" evidence="1">
    <location>
        <begin position="266"/>
        <end position="282"/>
    </location>
</feature>
<feature type="transmembrane region" description="Helical" evidence="1">
    <location>
        <begin position="309"/>
        <end position="325"/>
    </location>
</feature>
<feature type="transmembrane region" description="Helical" evidence="1">
    <location>
        <begin position="342"/>
        <end position="358"/>
    </location>
</feature>
<feature type="transmembrane region" description="Helical" evidence="1">
    <location>
        <begin position="373"/>
        <end position="389"/>
    </location>
</feature>
<feature type="transmembrane region" description="Helical" evidence="1">
    <location>
        <begin position="400"/>
        <end position="416"/>
    </location>
</feature>
<name>RFBX_SALTY</name>
<proteinExistence type="predicted"/>
<keyword id="KW-0997">Cell inner membrane</keyword>
<keyword id="KW-1003">Cell membrane</keyword>
<keyword id="KW-0448">Lipopolysaccharide biosynthesis</keyword>
<keyword id="KW-0472">Membrane</keyword>
<keyword id="KW-1185">Reference proteome</keyword>
<keyword id="KW-0812">Transmembrane</keyword>
<keyword id="KW-1133">Transmembrane helix</keyword>
<keyword id="KW-0813">Transport</keyword>
<gene>
    <name type="primary">rfbX</name>
    <name type="ordered locus">STM2088</name>
</gene>
<reference key="1">
    <citation type="journal article" date="1991" name="Mol. Microbiol.">
        <title>Structure and sequence of the rfb (O antigen) gene cluster of Salmonella serovar typhimurium (strain LT2).</title>
        <authorList>
            <person name="Jiang X.-M."/>
            <person name="Neal B."/>
            <person name="Santiago F."/>
            <person name="Lee S.J."/>
            <person name="Romana L.K."/>
            <person name="Reeves P.R."/>
        </authorList>
    </citation>
    <scope>NUCLEOTIDE SEQUENCE [GENOMIC DNA]</scope>
    <source>
        <strain>LT2</strain>
    </source>
</reference>
<reference key="2">
    <citation type="journal article" date="2001" name="Nature">
        <title>Complete genome sequence of Salmonella enterica serovar Typhimurium LT2.</title>
        <authorList>
            <person name="McClelland M."/>
            <person name="Sanderson K.E."/>
            <person name="Spieth J."/>
            <person name="Clifton S.W."/>
            <person name="Latreille P."/>
            <person name="Courtney L."/>
            <person name="Porwollik S."/>
            <person name="Ali J."/>
            <person name="Dante M."/>
            <person name="Du F."/>
            <person name="Hou S."/>
            <person name="Layman D."/>
            <person name="Leonard S."/>
            <person name="Nguyen C."/>
            <person name="Scott K."/>
            <person name="Holmes A."/>
            <person name="Grewal N."/>
            <person name="Mulvaney E."/>
            <person name="Ryan E."/>
            <person name="Sun H."/>
            <person name="Florea L."/>
            <person name="Miller W."/>
            <person name="Stoneking T."/>
            <person name="Nhan M."/>
            <person name="Waterston R."/>
            <person name="Wilson R.K."/>
        </authorList>
    </citation>
    <scope>NUCLEOTIDE SEQUENCE [LARGE SCALE GENOMIC DNA]</scope>
    <source>
        <strain>LT2 / SGSC1412 / ATCC 700720</strain>
    </source>
</reference>
<comment type="function">
    <text>May be involved in the translocation process of the nascent O-polysaccharide molecules and/or its ligation to lipid A core units.</text>
</comment>
<comment type="pathway">
    <text>Bacterial outer membrane biogenesis; LPS O-antigen biosynthesis.</text>
</comment>
<comment type="subcellular location">
    <subcellularLocation>
        <location evidence="2">Cell inner membrane</location>
        <topology evidence="2">Multi-pass membrane protein</topology>
    </subcellularLocation>
</comment>
<evidence type="ECO:0000255" key="1"/>
<evidence type="ECO:0000305" key="2"/>
<accession>P26400</accession>
<protein>
    <recommendedName>
        <fullName>Putative O-antigen transporter</fullName>
    </recommendedName>
</protein>
<sequence>MKVQLLKIPSHLIVAGSSWLSKIIIAGVQLASISYLISMLGEEKYAIFSLLTGLLVWCSAVDFGIGTGLQNYISECRAKNKSYDAYIKSALHLSFIAIIFFIALFYIFSGVISAKYLSSFHEVLQDKTRMLFFTSCLVFSSIGIGAIAYKILFAELVGWKANLLNALSYMIGMLGLLYIYYRGISVDIKLSLIVLYLPVGMISLCYIVYRYIKLYHVKTTKSHYIAILRRSSGFFLFTLLSIVVLQTDYMVISQRLTPADIVQYTVTMKIFGLVFFIYTAILQALWPICAELRVKQQWKKLNKMIGVNILLGSLYVVGCTIFIYLFKEQIFSVIAKDINYQVSILSFMLIGIYFCIRVWCDTYAMLLQSMNYLKILWILVPLQAIIGGIAQWYFSSTLGISGVLLGLIISFALTVFWGLPLTYLIKANKG</sequence>